<organism>
    <name type="scientific">Bos taurus</name>
    <name type="common">Bovine</name>
    <dbReference type="NCBI Taxonomy" id="9913"/>
    <lineage>
        <taxon>Eukaryota</taxon>
        <taxon>Metazoa</taxon>
        <taxon>Chordata</taxon>
        <taxon>Craniata</taxon>
        <taxon>Vertebrata</taxon>
        <taxon>Euteleostomi</taxon>
        <taxon>Mammalia</taxon>
        <taxon>Eutheria</taxon>
        <taxon>Laurasiatheria</taxon>
        <taxon>Artiodactyla</taxon>
        <taxon>Ruminantia</taxon>
        <taxon>Pecora</taxon>
        <taxon>Bovidae</taxon>
        <taxon>Bovinae</taxon>
        <taxon>Bos</taxon>
    </lineage>
</organism>
<feature type="chain" id="PRO_0000271013" description="Vexin">
    <location>
        <begin position="1"/>
        <end position="203"/>
    </location>
</feature>
<feature type="region of interest" description="Disordered" evidence="2">
    <location>
        <begin position="59"/>
        <end position="101"/>
    </location>
</feature>
<feature type="compositionally biased region" description="Basic and acidic residues" evidence="2">
    <location>
        <begin position="59"/>
        <end position="70"/>
    </location>
</feature>
<evidence type="ECO:0000250" key="1">
    <source>
        <dbReference type="UniProtKB" id="Q8BG31"/>
    </source>
</evidence>
<evidence type="ECO:0000256" key="2">
    <source>
        <dbReference type="SAM" id="MobiDB-lite"/>
    </source>
</evidence>
<evidence type="ECO:0000305" key="3"/>
<comment type="function">
    <text evidence="1">Required for neurogenesis in the neural plate and retina. Strongly cooperates with neural bHLH factors to promote neurogenesis.</text>
</comment>
<comment type="subcellular location">
    <subcellularLocation>
        <location evidence="1">Cell membrane</location>
    </subcellularLocation>
    <subcellularLocation>
        <location evidence="1">Nucleus</location>
    </subcellularLocation>
    <text evidence="1">Nuclear localization is essential for its function in neurogenesis.</text>
</comment>
<comment type="similarity">
    <text evidence="3">Belongs to the vexin family.</text>
</comment>
<keyword id="KW-1003">Cell membrane</keyword>
<keyword id="KW-0472">Membrane</keyword>
<keyword id="KW-0524">Neurogenesis</keyword>
<keyword id="KW-0539">Nucleus</keyword>
<keyword id="KW-1185">Reference proteome</keyword>
<reference key="1">
    <citation type="submission" date="2006-08" db="EMBL/GenBank/DDBJ databases">
        <authorList>
            <consortium name="NIH - Mammalian Gene Collection (MGC) project"/>
        </authorList>
    </citation>
    <scope>NUCLEOTIDE SEQUENCE [LARGE SCALE MRNA]</scope>
    <source>
        <strain>Hereford</strain>
        <tissue>Brain cortex</tissue>
    </source>
</reference>
<accession>Q0VCV7</accession>
<name>VEXIN_BOVIN</name>
<dbReference type="EMBL" id="BC119975">
    <property type="protein sequence ID" value="AAI19976.1"/>
    <property type="molecule type" value="mRNA"/>
</dbReference>
<dbReference type="RefSeq" id="NP_001069943.1">
    <property type="nucleotide sequence ID" value="NM_001076475.1"/>
</dbReference>
<dbReference type="FunCoup" id="Q0VCV7">
    <property type="interactions" value="194"/>
</dbReference>
<dbReference type="STRING" id="9913.ENSBTAP00000002838"/>
<dbReference type="PaxDb" id="9913-ENSBTAP00000002838"/>
<dbReference type="GeneID" id="617724"/>
<dbReference type="KEGG" id="bta:617724"/>
<dbReference type="CTD" id="254778"/>
<dbReference type="VEuPathDB" id="HostDB:ENSBTAG00000002192"/>
<dbReference type="eggNOG" id="ENOG502S3CJ">
    <property type="taxonomic scope" value="Eukaryota"/>
</dbReference>
<dbReference type="HOGENOM" id="CLU_116780_0_0_1"/>
<dbReference type="InParanoid" id="Q0VCV7"/>
<dbReference type="OMA" id="DRWDTGD"/>
<dbReference type="OrthoDB" id="5340910at2759"/>
<dbReference type="TreeFam" id="TF336189"/>
<dbReference type="Proteomes" id="UP000009136">
    <property type="component" value="Chromosome 14"/>
</dbReference>
<dbReference type="Bgee" id="ENSBTAG00000002192">
    <property type="expression patterns" value="Expressed in occipital lobe and 60 other cell types or tissues"/>
</dbReference>
<dbReference type="GO" id="GO:0005634">
    <property type="term" value="C:nucleus"/>
    <property type="evidence" value="ECO:0000250"/>
    <property type="project" value="UniProtKB"/>
</dbReference>
<dbReference type="GO" id="GO:0005886">
    <property type="term" value="C:plasma membrane"/>
    <property type="evidence" value="ECO:0000250"/>
    <property type="project" value="UniProtKB"/>
</dbReference>
<dbReference type="GO" id="GO:0022008">
    <property type="term" value="P:neurogenesis"/>
    <property type="evidence" value="ECO:0000250"/>
    <property type="project" value="UniProtKB"/>
</dbReference>
<dbReference type="GO" id="GO:0030182">
    <property type="term" value="P:neuron differentiation"/>
    <property type="evidence" value="ECO:0000250"/>
    <property type="project" value="UniProtKB"/>
</dbReference>
<dbReference type="InterPro" id="IPR040470">
    <property type="entry name" value="Vexin"/>
</dbReference>
<dbReference type="InterPro" id="IPR027900">
    <property type="entry name" value="Vexin_dom"/>
</dbReference>
<dbReference type="PANTHER" id="PTHR31520">
    <property type="entry name" value="VEXIN"/>
    <property type="match status" value="1"/>
</dbReference>
<dbReference type="PANTHER" id="PTHR31520:SF1">
    <property type="entry name" value="VEXIN"/>
    <property type="match status" value="1"/>
</dbReference>
<dbReference type="Pfam" id="PF15505">
    <property type="entry name" value="Vexin"/>
    <property type="match status" value="1"/>
</dbReference>
<protein>
    <recommendedName>
        <fullName evidence="1">Vexin</fullName>
    </recommendedName>
</protein>
<sequence>MHQIYSCSDENIEVFTTVIPSKVTSPARRRVKSSQHLLTKNVVIESDLYAPRPVELLPHRTDRRDGEGRWSGRFQNPRLQGPHPAKTPARPVGTSEPKSANLCGNRTYGKALMPPVARISVKAPTVLEAAAPGSENVAVLTRGSRHLKKMTEEFPTLPQGAEASLPLTGSAPCGMPSILRKMWTRHKKKSEYVGATNSAFEAD</sequence>
<gene>
    <name evidence="1" type="primary">VXN</name>
</gene>
<proteinExistence type="evidence at transcript level"/>